<feature type="chain" id="PRO_1000080289" description="Glycerol-3-phosphate acyltransferase">
    <location>
        <begin position="1"/>
        <end position="806"/>
    </location>
</feature>
<feature type="short sequence motif" description="HXXXXD motif">
    <location>
        <begin position="305"/>
        <end position="310"/>
    </location>
</feature>
<organism>
    <name type="scientific">Salmonella arizonae (strain ATCC BAA-731 / CDC346-86 / RSK2980)</name>
    <dbReference type="NCBI Taxonomy" id="41514"/>
    <lineage>
        <taxon>Bacteria</taxon>
        <taxon>Pseudomonadati</taxon>
        <taxon>Pseudomonadota</taxon>
        <taxon>Gammaproteobacteria</taxon>
        <taxon>Enterobacterales</taxon>
        <taxon>Enterobacteriaceae</taxon>
        <taxon>Salmonella</taxon>
    </lineage>
</organism>
<protein>
    <recommendedName>
        <fullName evidence="1">Glycerol-3-phosphate acyltransferase</fullName>
        <shortName evidence="1">GPAT</shortName>
        <ecNumber evidence="1">2.3.1.15</ecNumber>
    </recommendedName>
</protein>
<evidence type="ECO:0000255" key="1">
    <source>
        <dbReference type="HAMAP-Rule" id="MF_00393"/>
    </source>
</evidence>
<name>PLSB_SALAR</name>
<proteinExistence type="inferred from homology"/>
<sequence length="806" mass="91194">MSGWPRIYYKLLNLPLSILVKSKSIPAEPAQELGLDTSRPIMYVLPYNSKADLLTLRAQCLAHDLPDPLEPLEIDGALLPRYVFIHGGPRVFTYYTPKEESVKLFHDYLDLHRGNPALDVQMVPVSVMFGRAPGREKGEVNPPLRMLNGVQKFFAISWLGRDSFVRFSPSVSLRRMADEHGTDKIIAQKLARVARMHFARQRLAAVGPRLPARQDLFNKLLASKAIARAVEDEARSKKISHEKAQQNAIALMEEIAANFSYEMIRLTDRILGFTWNRLYQGINVHNAERVRQLAHDGHEIVYVPCHRSHMDYLLLSYVLYHQGLVPPHIAAGINLNFWPAGPIFRRLGAFFIRRTFKGNKLYSTVFREYLGELFSRGYSVEYFVEGGRSRTGRLLDPKTGTLSMTIQAMLRGGTRPITLVPIYIGYEHVMEVGTYAKELRGATKEKESLPQMLRGLSKLRNLGQGYVNFGEPMPLMTYLNQHVPEWRESIDPIEAIRPAWLTPTVNSIAADLMVRINNAGAANAMNLCCTALLASRQRSLTREQLTEQLDCYLDLMRNVPYSTDSTVPAASAGELIDHALQMNKFEAEKDTIGDIIILPREQAVLMTYYRNNIAHMLIMPSLMAAIITQHRRISRDALQQHVEALYPMLKAELFLRWEREELASVIDALASEMQRQGLITLQDNELHINPAHSRTLQLLAAGARETLQRYAITFWLLSANPSINRSTLEKESRTVAQRLSVLHGINAPEFFDKAVFSSLVLTLRDEGYISDTGDAEPAETMKIYQMLADLITSDVRLTIESATQGE</sequence>
<accession>A9MGP8</accession>
<comment type="catalytic activity">
    <reaction evidence="1">
        <text>sn-glycerol 3-phosphate + an acyl-CoA = a 1-acyl-sn-glycero-3-phosphate + CoA</text>
        <dbReference type="Rhea" id="RHEA:15325"/>
        <dbReference type="ChEBI" id="CHEBI:57287"/>
        <dbReference type="ChEBI" id="CHEBI:57597"/>
        <dbReference type="ChEBI" id="CHEBI:57970"/>
        <dbReference type="ChEBI" id="CHEBI:58342"/>
        <dbReference type="EC" id="2.3.1.15"/>
    </reaction>
</comment>
<comment type="pathway">
    <text evidence="1">Phospholipid metabolism; CDP-diacylglycerol biosynthesis; CDP-diacylglycerol from sn-glycerol 3-phosphate: step 1/3.</text>
</comment>
<comment type="subcellular location">
    <subcellularLocation>
        <location evidence="1">Cell inner membrane</location>
        <topology evidence="1">Peripheral membrane protein</topology>
        <orientation evidence="1">Cytoplasmic side</orientation>
    </subcellularLocation>
</comment>
<comment type="domain">
    <text evidence="1">The HXXXXD motif is essential for acyltransferase activity and may constitute the binding site for the phosphate moiety of the glycerol-3-phosphate.</text>
</comment>
<comment type="similarity">
    <text evidence="1">Belongs to the GPAT/DAPAT family.</text>
</comment>
<keyword id="KW-0012">Acyltransferase</keyword>
<keyword id="KW-0997">Cell inner membrane</keyword>
<keyword id="KW-1003">Cell membrane</keyword>
<keyword id="KW-0444">Lipid biosynthesis</keyword>
<keyword id="KW-0443">Lipid metabolism</keyword>
<keyword id="KW-0472">Membrane</keyword>
<keyword id="KW-0594">Phospholipid biosynthesis</keyword>
<keyword id="KW-1208">Phospholipid metabolism</keyword>
<keyword id="KW-1185">Reference proteome</keyword>
<keyword id="KW-0808">Transferase</keyword>
<gene>
    <name evidence="1" type="primary">plsB</name>
    <name type="ordered locus">SARI_03443</name>
</gene>
<dbReference type="EC" id="2.3.1.15" evidence="1"/>
<dbReference type="EMBL" id="CP000880">
    <property type="protein sequence ID" value="ABX23272.1"/>
    <property type="molecule type" value="Genomic_DNA"/>
</dbReference>
<dbReference type="SMR" id="A9MGP8"/>
<dbReference type="STRING" id="41514.SARI_03443"/>
<dbReference type="KEGG" id="ses:SARI_03443"/>
<dbReference type="HOGENOM" id="CLU_015407_0_0_6"/>
<dbReference type="UniPathway" id="UPA00557">
    <property type="reaction ID" value="UER00612"/>
</dbReference>
<dbReference type="Proteomes" id="UP000002084">
    <property type="component" value="Chromosome"/>
</dbReference>
<dbReference type="GO" id="GO:0005886">
    <property type="term" value="C:plasma membrane"/>
    <property type="evidence" value="ECO:0007669"/>
    <property type="project" value="UniProtKB-SubCell"/>
</dbReference>
<dbReference type="GO" id="GO:0004366">
    <property type="term" value="F:glycerol-3-phosphate O-acyltransferase activity"/>
    <property type="evidence" value="ECO:0007669"/>
    <property type="project" value="UniProtKB-UniRule"/>
</dbReference>
<dbReference type="GO" id="GO:0016024">
    <property type="term" value="P:CDP-diacylglycerol biosynthetic process"/>
    <property type="evidence" value="ECO:0007669"/>
    <property type="project" value="UniProtKB-UniRule"/>
</dbReference>
<dbReference type="GO" id="GO:0006631">
    <property type="term" value="P:fatty acid metabolic process"/>
    <property type="evidence" value="ECO:0007669"/>
    <property type="project" value="TreeGrafter"/>
</dbReference>
<dbReference type="CDD" id="cd07993">
    <property type="entry name" value="LPLAT_DHAPAT-like"/>
    <property type="match status" value="1"/>
</dbReference>
<dbReference type="HAMAP" id="MF_00393">
    <property type="entry name" value="Glyc3P_acyltrans"/>
    <property type="match status" value="1"/>
</dbReference>
<dbReference type="InterPro" id="IPR022284">
    <property type="entry name" value="GPAT/DHAPAT"/>
</dbReference>
<dbReference type="InterPro" id="IPR045520">
    <property type="entry name" value="GPAT/DHAPAT_C"/>
</dbReference>
<dbReference type="InterPro" id="IPR041728">
    <property type="entry name" value="GPAT/DHAPAT_LPLAT"/>
</dbReference>
<dbReference type="InterPro" id="IPR028354">
    <property type="entry name" value="GPAT_PlsB"/>
</dbReference>
<dbReference type="InterPro" id="IPR002123">
    <property type="entry name" value="Plipid/glycerol_acylTrfase"/>
</dbReference>
<dbReference type="NCBIfam" id="TIGR03703">
    <property type="entry name" value="plsB"/>
    <property type="match status" value="1"/>
</dbReference>
<dbReference type="NCBIfam" id="NF003441">
    <property type="entry name" value="PRK04974.1"/>
    <property type="match status" value="1"/>
</dbReference>
<dbReference type="PANTHER" id="PTHR12563:SF17">
    <property type="entry name" value="DIHYDROXYACETONE PHOSPHATE ACYLTRANSFERASE"/>
    <property type="match status" value="1"/>
</dbReference>
<dbReference type="PANTHER" id="PTHR12563">
    <property type="entry name" value="GLYCEROL-3-PHOSPHATE ACYLTRANSFERASE"/>
    <property type="match status" value="1"/>
</dbReference>
<dbReference type="Pfam" id="PF01553">
    <property type="entry name" value="Acyltransferase"/>
    <property type="match status" value="1"/>
</dbReference>
<dbReference type="Pfam" id="PF19277">
    <property type="entry name" value="GPAT_C"/>
    <property type="match status" value="1"/>
</dbReference>
<dbReference type="PIRSF" id="PIRSF500064">
    <property type="entry name" value="GPAT"/>
    <property type="match status" value="1"/>
</dbReference>
<dbReference type="PIRSF" id="PIRSF000437">
    <property type="entry name" value="GPAT_DHAPAT"/>
    <property type="match status" value="1"/>
</dbReference>
<dbReference type="SMART" id="SM00563">
    <property type="entry name" value="PlsC"/>
    <property type="match status" value="1"/>
</dbReference>
<dbReference type="SUPFAM" id="SSF69593">
    <property type="entry name" value="Glycerol-3-phosphate (1)-acyltransferase"/>
    <property type="match status" value="1"/>
</dbReference>
<reference key="1">
    <citation type="submission" date="2007-11" db="EMBL/GenBank/DDBJ databases">
        <authorList>
            <consortium name="The Salmonella enterica serovar Arizonae Genome Sequencing Project"/>
            <person name="McClelland M."/>
            <person name="Sanderson E.K."/>
            <person name="Porwollik S."/>
            <person name="Spieth J."/>
            <person name="Clifton W.S."/>
            <person name="Fulton R."/>
            <person name="Chunyan W."/>
            <person name="Wollam A."/>
            <person name="Shah N."/>
            <person name="Pepin K."/>
            <person name="Bhonagiri V."/>
            <person name="Nash W."/>
            <person name="Johnson M."/>
            <person name="Thiruvilangam P."/>
            <person name="Wilson R."/>
        </authorList>
    </citation>
    <scope>NUCLEOTIDE SEQUENCE [LARGE SCALE GENOMIC DNA]</scope>
    <source>
        <strain>ATCC BAA-731 / CDC346-86 / RSK2980</strain>
    </source>
</reference>